<evidence type="ECO:0000255" key="1">
    <source>
        <dbReference type="PROSITE-ProRule" id="PRU00288"/>
    </source>
</evidence>
<evidence type="ECO:0000256" key="2">
    <source>
        <dbReference type="SAM" id="MobiDB-lite"/>
    </source>
</evidence>
<evidence type="ECO:0000305" key="3"/>
<comment type="function">
    <text evidence="3">GTPase-activating protein for the ADP ribosylation factor family.</text>
</comment>
<gene>
    <name type="ORF">F07F6.4</name>
</gene>
<keyword id="KW-0343">GTPase activation</keyword>
<keyword id="KW-0479">Metal-binding</keyword>
<keyword id="KW-1185">Reference proteome</keyword>
<keyword id="KW-0862">Zinc</keyword>
<keyword id="KW-0863">Zinc-finger</keyword>
<proteinExistence type="predicted"/>
<sequence>MSDENGPSKVDLQTAMRKMRALPPNKLCFDCGARNPTWCTVTYGVFLCIDCSAVHRNLGVHLTFVRSTNLDTNWTWLQLRAMQLGGNGNANQFFKAHGCNTTEAQQKYKSRAAQMYRDKLSTLCQEAQRKFGTQLIIDTVTHAEEKPAEEEDFFAQDFGHTSASATSLSSDAYIADHKSEDSTHGPSVDHLDSSVAVPTSAPVSVILKKPIKKATLGAKKNALGAQKVRINFDEIEQRAAEKERQTAAEVAANKLAYQTELDGKKKSDDAAALQKLSAKFAMQDIDAQRKQMEAKVAKDPTKAASVDRLGMGGVGRSRAAHSVAGGIRSIKQDDVLTFKKPSQPKEDDDWEVIDDKYGKKSTNNEDDFFSKDYTSSSSKKTTKEDDFFDSFETQPVQKSRYTASSSSSSTSRAPTTRLTAGASPISDVDLQKKFGNAKAISSDMYFGTPEMDCETRSALTKCEGQTSFGSEDLWGNGSQQRQSSQVPDMSDLKDSFRAGASKVAEKWSTLSSSFSTYMSRAPPATGEKT</sequence>
<dbReference type="EMBL" id="FO081043">
    <property type="protein sequence ID" value="CCD68748.1"/>
    <property type="molecule type" value="Genomic_DNA"/>
</dbReference>
<dbReference type="RefSeq" id="NP_495029.2">
    <property type="nucleotide sequence ID" value="NM_062628.4"/>
</dbReference>
<dbReference type="SMR" id="Q09531"/>
<dbReference type="BioGRID" id="39271">
    <property type="interactions" value="9"/>
</dbReference>
<dbReference type="FunCoup" id="Q09531">
    <property type="interactions" value="2809"/>
</dbReference>
<dbReference type="STRING" id="6239.F07F6.4.1"/>
<dbReference type="iPTMnet" id="Q09531"/>
<dbReference type="PaxDb" id="6239-F07F6.4"/>
<dbReference type="PeptideAtlas" id="Q09531"/>
<dbReference type="EnsemblMetazoa" id="F07F6.4.1">
    <property type="protein sequence ID" value="F07F6.4.1"/>
    <property type="gene ID" value="WBGene00017217"/>
</dbReference>
<dbReference type="GeneID" id="173927"/>
<dbReference type="KEGG" id="cel:CELE_F07F6.4"/>
<dbReference type="UCSC" id="F07F6.4.1">
    <property type="organism name" value="c. elegans"/>
</dbReference>
<dbReference type="AGR" id="WB:WBGene00017217"/>
<dbReference type="CTD" id="173927"/>
<dbReference type="WormBase" id="F07F6.4">
    <property type="protein sequence ID" value="CE29955"/>
    <property type="gene ID" value="WBGene00017217"/>
</dbReference>
<dbReference type="eggNOG" id="KOG0706">
    <property type="taxonomic scope" value="Eukaryota"/>
</dbReference>
<dbReference type="GeneTree" id="ENSGT00940000173235"/>
<dbReference type="HOGENOM" id="CLU_023062_6_2_1"/>
<dbReference type="InParanoid" id="Q09531"/>
<dbReference type="OMA" id="ENGPSKV"/>
<dbReference type="OrthoDB" id="983479at2759"/>
<dbReference type="PhylomeDB" id="Q09531"/>
<dbReference type="Reactome" id="R-CEL-6811434">
    <property type="pathway name" value="COPI-dependent Golgi-to-ER retrograde traffic"/>
</dbReference>
<dbReference type="Reactome" id="R-CEL-9013408">
    <property type="pathway name" value="RHOG GTPase cycle"/>
</dbReference>
<dbReference type="PRO" id="PR:Q09531"/>
<dbReference type="Proteomes" id="UP000001940">
    <property type="component" value="Chromosome II"/>
</dbReference>
<dbReference type="Bgee" id="WBGene00017217">
    <property type="expression patterns" value="Expressed in germ line (C elegans) and 4 other cell types or tissues"/>
</dbReference>
<dbReference type="GO" id="GO:0000139">
    <property type="term" value="C:Golgi membrane"/>
    <property type="evidence" value="ECO:0007669"/>
    <property type="project" value="GOC"/>
</dbReference>
<dbReference type="GO" id="GO:0005096">
    <property type="term" value="F:GTPase activator activity"/>
    <property type="evidence" value="ECO:0007669"/>
    <property type="project" value="UniProtKB-KW"/>
</dbReference>
<dbReference type="GO" id="GO:0008270">
    <property type="term" value="F:zinc ion binding"/>
    <property type="evidence" value="ECO:0007669"/>
    <property type="project" value="UniProtKB-KW"/>
</dbReference>
<dbReference type="GO" id="GO:0048205">
    <property type="term" value="P:COPI coating of Golgi vesicle"/>
    <property type="evidence" value="ECO:0000318"/>
    <property type="project" value="GO_Central"/>
</dbReference>
<dbReference type="GO" id="GO:0036498">
    <property type="term" value="P:IRE1-mediated unfolded protein response"/>
    <property type="evidence" value="ECO:0007007"/>
    <property type="project" value="WormBase"/>
</dbReference>
<dbReference type="CDD" id="cd08959">
    <property type="entry name" value="ArfGap_ArfGap1_like"/>
    <property type="match status" value="1"/>
</dbReference>
<dbReference type="FunFam" id="1.10.220.150:FF:000004">
    <property type="entry name" value="Putative ADP-ribosylation factor GTPase-activating protein 2"/>
    <property type="match status" value="1"/>
</dbReference>
<dbReference type="Gene3D" id="1.10.220.150">
    <property type="entry name" value="Arf GTPase activating protein"/>
    <property type="match status" value="1"/>
</dbReference>
<dbReference type="InterPro" id="IPR037278">
    <property type="entry name" value="ARFGAP/RecO"/>
</dbReference>
<dbReference type="InterPro" id="IPR001164">
    <property type="entry name" value="ArfGAP_dom"/>
</dbReference>
<dbReference type="InterPro" id="IPR038508">
    <property type="entry name" value="ArfGAP_dom_sf"/>
</dbReference>
<dbReference type="PANTHER" id="PTHR45686:SF4">
    <property type="entry name" value="ADP-RIBOSYLATION FACTOR GTPASE ACTIVATING PROTEIN 3, ISOFORM H"/>
    <property type="match status" value="1"/>
</dbReference>
<dbReference type="PANTHER" id="PTHR45686">
    <property type="entry name" value="ADP-RIBOSYLATION FACTOR GTPASE ACTIVATING PROTEIN 3, ISOFORM H-RELATED"/>
    <property type="match status" value="1"/>
</dbReference>
<dbReference type="Pfam" id="PF01412">
    <property type="entry name" value="ArfGap"/>
    <property type="match status" value="1"/>
</dbReference>
<dbReference type="PRINTS" id="PR00405">
    <property type="entry name" value="REVINTRACTNG"/>
</dbReference>
<dbReference type="SMART" id="SM00105">
    <property type="entry name" value="ArfGap"/>
    <property type="match status" value="1"/>
</dbReference>
<dbReference type="SUPFAM" id="SSF57863">
    <property type="entry name" value="ArfGap/RecO-like zinc finger"/>
    <property type="match status" value="1"/>
</dbReference>
<dbReference type="PROSITE" id="PS50115">
    <property type="entry name" value="ARFGAP"/>
    <property type="match status" value="1"/>
</dbReference>
<organism>
    <name type="scientific">Caenorhabditis elegans</name>
    <dbReference type="NCBI Taxonomy" id="6239"/>
    <lineage>
        <taxon>Eukaryota</taxon>
        <taxon>Metazoa</taxon>
        <taxon>Ecdysozoa</taxon>
        <taxon>Nematoda</taxon>
        <taxon>Chromadorea</taxon>
        <taxon>Rhabditida</taxon>
        <taxon>Rhabditina</taxon>
        <taxon>Rhabditomorpha</taxon>
        <taxon>Rhabditoidea</taxon>
        <taxon>Rhabditidae</taxon>
        <taxon>Peloderinae</taxon>
        <taxon>Caenorhabditis</taxon>
    </lineage>
</organism>
<reference key="1">
    <citation type="journal article" date="1998" name="Science">
        <title>Genome sequence of the nematode C. elegans: a platform for investigating biology.</title>
        <authorList>
            <consortium name="The C. elegans sequencing consortium"/>
        </authorList>
    </citation>
    <scope>NUCLEOTIDE SEQUENCE [LARGE SCALE GENOMIC DNA]</scope>
    <source>
        <strain>Bristol N2</strain>
    </source>
</reference>
<feature type="chain" id="PRO_0000074231" description="Uncharacterized protein F07F6.4">
    <location>
        <begin position="1"/>
        <end position="529"/>
    </location>
</feature>
<feature type="domain" description="Arf-GAP" evidence="1">
    <location>
        <begin position="13"/>
        <end position="129"/>
    </location>
</feature>
<feature type="zinc finger region" description="C4-type" evidence="1">
    <location>
        <begin position="28"/>
        <end position="51"/>
    </location>
</feature>
<feature type="region of interest" description="Disordered" evidence="2">
    <location>
        <begin position="291"/>
        <end position="313"/>
    </location>
</feature>
<feature type="region of interest" description="Disordered" evidence="2">
    <location>
        <begin position="335"/>
        <end position="357"/>
    </location>
</feature>
<feature type="region of interest" description="Disordered" evidence="2">
    <location>
        <begin position="398"/>
        <end position="424"/>
    </location>
</feature>
<feature type="region of interest" description="Disordered" evidence="2">
    <location>
        <begin position="468"/>
        <end position="493"/>
    </location>
</feature>
<feature type="compositionally biased region" description="Basic and acidic residues" evidence="2">
    <location>
        <begin position="291"/>
        <end position="301"/>
    </location>
</feature>
<feature type="compositionally biased region" description="Low complexity" evidence="2">
    <location>
        <begin position="399"/>
        <end position="420"/>
    </location>
</feature>
<feature type="compositionally biased region" description="Polar residues" evidence="2">
    <location>
        <begin position="476"/>
        <end position="487"/>
    </location>
</feature>
<accession>Q09531</accession>
<protein>
    <recommendedName>
        <fullName>Uncharacterized protein F07F6.4</fullName>
    </recommendedName>
</protein>
<name>YQP4_CAEEL</name>